<comment type="similarity">
    <text evidence="2">Belongs to the UPF0758 family.</text>
</comment>
<evidence type="ECO:0000255" key="1">
    <source>
        <dbReference type="PROSITE-ProRule" id="PRU01182"/>
    </source>
</evidence>
<evidence type="ECO:0000305" key="2"/>
<proteinExistence type="inferred from homology"/>
<protein>
    <recommendedName>
        <fullName>UPF0758 protein NGO_0681</fullName>
    </recommendedName>
</protein>
<organism>
    <name type="scientific">Neisseria gonorrhoeae (strain ATCC 700825 / FA 1090)</name>
    <dbReference type="NCBI Taxonomy" id="242231"/>
    <lineage>
        <taxon>Bacteria</taxon>
        <taxon>Pseudomonadati</taxon>
        <taxon>Pseudomonadota</taxon>
        <taxon>Betaproteobacteria</taxon>
        <taxon>Neisseriales</taxon>
        <taxon>Neisseriaceae</taxon>
        <taxon>Neisseria</taxon>
    </lineage>
</organism>
<name>Y681_NEIG1</name>
<feature type="chain" id="PRO_0000190710" description="UPF0758 protein NGO_0681">
    <location>
        <begin position="1"/>
        <end position="225"/>
    </location>
</feature>
<feature type="domain" description="MPN" evidence="1">
    <location>
        <begin position="102"/>
        <end position="224"/>
    </location>
</feature>
<feature type="short sequence motif" description="JAMM motif" evidence="1">
    <location>
        <begin position="173"/>
        <end position="186"/>
    </location>
</feature>
<feature type="binding site" evidence="1">
    <location>
        <position position="173"/>
    </location>
    <ligand>
        <name>Zn(2+)</name>
        <dbReference type="ChEBI" id="CHEBI:29105"/>
        <note>catalytic</note>
    </ligand>
</feature>
<feature type="binding site" evidence="1">
    <location>
        <position position="175"/>
    </location>
    <ligand>
        <name>Zn(2+)</name>
        <dbReference type="ChEBI" id="CHEBI:29105"/>
        <note>catalytic</note>
    </ligand>
</feature>
<feature type="binding site" evidence="1">
    <location>
        <position position="186"/>
    </location>
    <ligand>
        <name>Zn(2+)</name>
        <dbReference type="ChEBI" id="CHEBI:29105"/>
        <note>catalytic</note>
    </ligand>
</feature>
<reference key="1">
    <citation type="submission" date="2003-03" db="EMBL/GenBank/DDBJ databases">
        <title>The complete genome sequence of Neisseria gonorrhoeae.</title>
        <authorList>
            <person name="Lewis L.A."/>
            <person name="Gillaspy A.F."/>
            <person name="McLaughlin R.E."/>
            <person name="Gipson M."/>
            <person name="Ducey T.F."/>
            <person name="Ownbey T."/>
            <person name="Hartman K."/>
            <person name="Nydick C."/>
            <person name="Carson M.B."/>
            <person name="Vaughn J."/>
            <person name="Thomson C."/>
            <person name="Song L."/>
            <person name="Lin S."/>
            <person name="Yuan X."/>
            <person name="Najar F."/>
            <person name="Zhan M."/>
            <person name="Ren Q."/>
            <person name="Zhu H."/>
            <person name="Qi S."/>
            <person name="Kenton S.M."/>
            <person name="Lai H."/>
            <person name="White J.D."/>
            <person name="Clifton S."/>
            <person name="Roe B.A."/>
            <person name="Dyer D.W."/>
        </authorList>
    </citation>
    <scope>NUCLEOTIDE SEQUENCE [LARGE SCALE GENOMIC DNA]</scope>
    <source>
        <strain>ATCC 700825 / FA 1090</strain>
    </source>
</reference>
<dbReference type="EMBL" id="AE004969">
    <property type="protein sequence ID" value="AAW89408.1"/>
    <property type="molecule type" value="Genomic_DNA"/>
</dbReference>
<dbReference type="RefSeq" id="YP_207820.1">
    <property type="nucleotide sequence ID" value="NC_002946.2"/>
</dbReference>
<dbReference type="SMR" id="Q5F8S9"/>
<dbReference type="STRING" id="242231.NGO_0681"/>
<dbReference type="KEGG" id="ngo:NGO_0681"/>
<dbReference type="PATRIC" id="fig|242231.10.peg.802"/>
<dbReference type="HOGENOM" id="CLU_073529_0_1_4"/>
<dbReference type="Proteomes" id="UP000000535">
    <property type="component" value="Chromosome"/>
</dbReference>
<dbReference type="GO" id="GO:0046872">
    <property type="term" value="F:metal ion binding"/>
    <property type="evidence" value="ECO:0007669"/>
    <property type="project" value="UniProtKB-KW"/>
</dbReference>
<dbReference type="GO" id="GO:0008237">
    <property type="term" value="F:metallopeptidase activity"/>
    <property type="evidence" value="ECO:0007669"/>
    <property type="project" value="UniProtKB-KW"/>
</dbReference>
<dbReference type="GO" id="GO:0006508">
    <property type="term" value="P:proteolysis"/>
    <property type="evidence" value="ECO:0007669"/>
    <property type="project" value="UniProtKB-KW"/>
</dbReference>
<dbReference type="CDD" id="cd08071">
    <property type="entry name" value="MPN_DUF2466"/>
    <property type="match status" value="1"/>
</dbReference>
<dbReference type="Gene3D" id="3.40.140.10">
    <property type="entry name" value="Cytidine Deaminase, domain 2"/>
    <property type="match status" value="1"/>
</dbReference>
<dbReference type="InterPro" id="IPR037518">
    <property type="entry name" value="MPN"/>
</dbReference>
<dbReference type="InterPro" id="IPR025657">
    <property type="entry name" value="RadC_JAB"/>
</dbReference>
<dbReference type="InterPro" id="IPR010994">
    <property type="entry name" value="RuvA_2-like"/>
</dbReference>
<dbReference type="InterPro" id="IPR001405">
    <property type="entry name" value="UPF0758"/>
</dbReference>
<dbReference type="InterPro" id="IPR046778">
    <property type="entry name" value="UPF0758_N"/>
</dbReference>
<dbReference type="NCBIfam" id="NF000642">
    <property type="entry name" value="PRK00024.1"/>
    <property type="match status" value="1"/>
</dbReference>
<dbReference type="NCBIfam" id="TIGR00608">
    <property type="entry name" value="radc"/>
    <property type="match status" value="1"/>
</dbReference>
<dbReference type="PANTHER" id="PTHR30471">
    <property type="entry name" value="DNA REPAIR PROTEIN RADC"/>
    <property type="match status" value="1"/>
</dbReference>
<dbReference type="PANTHER" id="PTHR30471:SF3">
    <property type="entry name" value="UPF0758 PROTEIN YEES-RELATED"/>
    <property type="match status" value="1"/>
</dbReference>
<dbReference type="Pfam" id="PF04002">
    <property type="entry name" value="RadC"/>
    <property type="match status" value="1"/>
</dbReference>
<dbReference type="Pfam" id="PF20582">
    <property type="entry name" value="UPF0758_N"/>
    <property type="match status" value="1"/>
</dbReference>
<dbReference type="SUPFAM" id="SSF102712">
    <property type="entry name" value="JAB1/MPN domain"/>
    <property type="match status" value="1"/>
</dbReference>
<dbReference type="SUPFAM" id="SSF47781">
    <property type="entry name" value="RuvA domain 2-like"/>
    <property type="match status" value="1"/>
</dbReference>
<dbReference type="PROSITE" id="PS50249">
    <property type="entry name" value="MPN"/>
    <property type="match status" value="1"/>
</dbReference>
<gene>
    <name type="ordered locus">NGO_0681</name>
</gene>
<keyword id="KW-0378">Hydrolase</keyword>
<keyword id="KW-0479">Metal-binding</keyword>
<keyword id="KW-0482">Metalloprotease</keyword>
<keyword id="KW-0645">Protease</keyword>
<keyword id="KW-1185">Reference proteome</keyword>
<keyword id="KW-0862">Zinc</keyword>
<sequence length="225" mass="25109">MSIKQWPEGERPREKLLERGAAALSDAELLAILLRVGTRGMSAVDLARYLLQEFGSLGRLMSAEVGKLSAYKGMGTASFTQFAVVREIGRRILEEELQEEITLSDPDTVADYLRFHLGQEKVEVSVALLLNRQNQLIAVRELSRGTVAENTIYIREIVKLALDEYADSLIIAHNHPGGSPEPSQEDIMFTRRLAQAMSLVDVSLLDHFIVTSQTVRSFRQLGLMP</sequence>
<accession>Q5F8S9</accession>